<comment type="function">
    <text evidence="1">Specifically methylates the guanine in position 1835 (m2G1835) of 23S rRNA.</text>
</comment>
<comment type="catalytic activity">
    <reaction evidence="1">
        <text>guanosine(1835) in 23S rRNA + S-adenosyl-L-methionine = N(2)-methylguanosine(1835) in 23S rRNA + S-adenosyl-L-homocysteine + H(+)</text>
        <dbReference type="Rhea" id="RHEA:42744"/>
        <dbReference type="Rhea" id="RHEA-COMP:10217"/>
        <dbReference type="Rhea" id="RHEA-COMP:10218"/>
        <dbReference type="ChEBI" id="CHEBI:15378"/>
        <dbReference type="ChEBI" id="CHEBI:57856"/>
        <dbReference type="ChEBI" id="CHEBI:59789"/>
        <dbReference type="ChEBI" id="CHEBI:74269"/>
        <dbReference type="ChEBI" id="CHEBI:74481"/>
        <dbReference type="EC" id="2.1.1.174"/>
    </reaction>
</comment>
<comment type="subcellular location">
    <subcellularLocation>
        <location evidence="1">Cytoplasm</location>
    </subcellularLocation>
</comment>
<comment type="similarity">
    <text evidence="1">Belongs to the methyltransferase superfamily. RlmG family.</text>
</comment>
<proteinExistence type="inferred from homology"/>
<protein>
    <recommendedName>
        <fullName evidence="1">Ribosomal RNA large subunit methyltransferase G</fullName>
        <ecNumber evidence="1">2.1.1.174</ecNumber>
    </recommendedName>
    <alternativeName>
        <fullName evidence="1">23S rRNA m2G1835 methyltransferase</fullName>
    </alternativeName>
    <alternativeName>
        <fullName evidence="1">rRNA (guanine-N(2)-)-methyltransferase RlmG</fullName>
    </alternativeName>
</protein>
<name>RLMG_PSEPK</name>
<keyword id="KW-0963">Cytoplasm</keyword>
<keyword id="KW-0489">Methyltransferase</keyword>
<keyword id="KW-1185">Reference proteome</keyword>
<keyword id="KW-0698">rRNA processing</keyword>
<keyword id="KW-0949">S-adenosyl-L-methionine</keyword>
<keyword id="KW-0808">Transferase</keyword>
<reference key="1">
    <citation type="journal article" date="2002" name="Environ. Microbiol.">
        <title>Complete genome sequence and comparative analysis of the metabolically versatile Pseudomonas putida KT2440.</title>
        <authorList>
            <person name="Nelson K.E."/>
            <person name="Weinel C."/>
            <person name="Paulsen I.T."/>
            <person name="Dodson R.J."/>
            <person name="Hilbert H."/>
            <person name="Martins dos Santos V.A.P."/>
            <person name="Fouts D.E."/>
            <person name="Gill S.R."/>
            <person name="Pop M."/>
            <person name="Holmes M."/>
            <person name="Brinkac L.M."/>
            <person name="Beanan M.J."/>
            <person name="DeBoy R.T."/>
            <person name="Daugherty S.C."/>
            <person name="Kolonay J.F."/>
            <person name="Madupu R."/>
            <person name="Nelson W.C."/>
            <person name="White O."/>
            <person name="Peterson J.D."/>
            <person name="Khouri H.M."/>
            <person name="Hance I."/>
            <person name="Chris Lee P."/>
            <person name="Holtzapple E.K."/>
            <person name="Scanlan D."/>
            <person name="Tran K."/>
            <person name="Moazzez A."/>
            <person name="Utterback T.R."/>
            <person name="Rizzo M."/>
            <person name="Lee K."/>
            <person name="Kosack D."/>
            <person name="Moestl D."/>
            <person name="Wedler H."/>
            <person name="Lauber J."/>
            <person name="Stjepandic D."/>
            <person name="Hoheisel J."/>
            <person name="Straetz M."/>
            <person name="Heim S."/>
            <person name="Kiewitz C."/>
            <person name="Eisen J.A."/>
            <person name="Timmis K.N."/>
            <person name="Duesterhoeft A."/>
            <person name="Tuemmler B."/>
            <person name="Fraser C.M."/>
        </authorList>
    </citation>
    <scope>NUCLEOTIDE SEQUENCE [LARGE SCALE GENOMIC DNA]</scope>
    <source>
        <strain>ATCC 47054 / DSM 6125 / CFBP 8728 / NCIMB 11950 / KT2440</strain>
    </source>
</reference>
<feature type="chain" id="PRO_0000366481" description="Ribosomal RNA large subunit methyltransferase G">
    <location>
        <begin position="1"/>
        <end position="374"/>
    </location>
</feature>
<organism>
    <name type="scientific">Pseudomonas putida (strain ATCC 47054 / DSM 6125 / CFBP 8728 / NCIMB 11950 / KT2440)</name>
    <dbReference type="NCBI Taxonomy" id="160488"/>
    <lineage>
        <taxon>Bacteria</taxon>
        <taxon>Pseudomonadati</taxon>
        <taxon>Pseudomonadota</taxon>
        <taxon>Gammaproteobacteria</taxon>
        <taxon>Pseudomonadales</taxon>
        <taxon>Pseudomonadaceae</taxon>
        <taxon>Pseudomonas</taxon>
    </lineage>
</organism>
<evidence type="ECO:0000255" key="1">
    <source>
        <dbReference type="HAMAP-Rule" id="MF_01859"/>
    </source>
</evidence>
<gene>
    <name evidence="1" type="primary">rlmG</name>
    <name type="ordered locus">PP_4648</name>
</gene>
<sequence>MPLLTTPYAELDLIRQPEQANDPLQAFDAADEYLLAQLHDQAPDANCRVLVLNDSFGALAASLAGQLQVVSSGDSHLGHLALEKNLARNGLPFDSVPFVPASEHWQGPFDRVLVRVPKTLALLEEQLIRLQGQLAPGAQVIAGAMIKHLPRAAGDLMEKYIGPVQASLALKKARLLTATVAERPLAKSPYPSCYRLDAPALDLVNHANVFCREGLDIGTRAFLPHLPRNLGRARVADLGCGNGVLAIASALANPEAEYTLVDESYMAVQSAQENWLAALGERPATFLAADGLAGLEKQSLDVVLCNPPFHQQQVVGDFLAWRMFQQAREALVVGGALYIVGNRHLGYHSKLARLFRGVEQVAATPKFVILKARK</sequence>
<accession>Q88E20</accession>
<dbReference type="EC" id="2.1.1.174" evidence="1"/>
<dbReference type="EMBL" id="AE015451">
    <property type="protein sequence ID" value="AAN70221.1"/>
    <property type="molecule type" value="Genomic_DNA"/>
</dbReference>
<dbReference type="RefSeq" id="NP_746757.1">
    <property type="nucleotide sequence ID" value="NC_002947.4"/>
</dbReference>
<dbReference type="RefSeq" id="WP_010955306.1">
    <property type="nucleotide sequence ID" value="NZ_CP169744.1"/>
</dbReference>
<dbReference type="SMR" id="Q88E20"/>
<dbReference type="STRING" id="160488.PP_4648"/>
<dbReference type="PaxDb" id="160488-PP_4648"/>
<dbReference type="KEGG" id="ppu:PP_4648"/>
<dbReference type="PATRIC" id="fig|160488.4.peg.4956"/>
<dbReference type="eggNOG" id="COG2813">
    <property type="taxonomic scope" value="Bacteria"/>
</dbReference>
<dbReference type="HOGENOM" id="CLU_040288_4_0_6"/>
<dbReference type="OrthoDB" id="29650at2"/>
<dbReference type="PhylomeDB" id="Q88E20"/>
<dbReference type="BioCyc" id="PPUT160488:G1G01-4961-MONOMER"/>
<dbReference type="Proteomes" id="UP000000556">
    <property type="component" value="Chromosome"/>
</dbReference>
<dbReference type="GO" id="GO:0005737">
    <property type="term" value="C:cytoplasm"/>
    <property type="evidence" value="ECO:0007669"/>
    <property type="project" value="UniProtKB-SubCell"/>
</dbReference>
<dbReference type="GO" id="GO:0052916">
    <property type="term" value="F:23S rRNA (guanine(1835)-N(2))-methyltransferase activity"/>
    <property type="evidence" value="ECO:0007669"/>
    <property type="project" value="UniProtKB-EC"/>
</dbReference>
<dbReference type="GO" id="GO:0003676">
    <property type="term" value="F:nucleic acid binding"/>
    <property type="evidence" value="ECO:0007669"/>
    <property type="project" value="InterPro"/>
</dbReference>
<dbReference type="CDD" id="cd02440">
    <property type="entry name" value="AdoMet_MTases"/>
    <property type="match status" value="1"/>
</dbReference>
<dbReference type="Gene3D" id="3.40.50.150">
    <property type="entry name" value="Vaccinia Virus protein VP39"/>
    <property type="match status" value="2"/>
</dbReference>
<dbReference type="HAMAP" id="MF_01859">
    <property type="entry name" value="23SrRNA_methyltr_G"/>
    <property type="match status" value="1"/>
</dbReference>
<dbReference type="InterPro" id="IPR002052">
    <property type="entry name" value="DNA_methylase_N6_adenine_CS"/>
</dbReference>
<dbReference type="InterPro" id="IPR017237">
    <property type="entry name" value="rRNA_m2G-MeTrfase_RlmG"/>
</dbReference>
<dbReference type="InterPro" id="IPR046977">
    <property type="entry name" value="RsmC/RlmG"/>
</dbReference>
<dbReference type="InterPro" id="IPR029063">
    <property type="entry name" value="SAM-dependent_MTases_sf"/>
</dbReference>
<dbReference type="InterPro" id="IPR007848">
    <property type="entry name" value="Small_mtfrase_dom"/>
</dbReference>
<dbReference type="PANTHER" id="PTHR47816:SF5">
    <property type="entry name" value="RIBOSOMAL RNA LARGE SUBUNIT METHYLTRANSFERASE G"/>
    <property type="match status" value="1"/>
</dbReference>
<dbReference type="PANTHER" id="PTHR47816">
    <property type="entry name" value="RIBOSOMAL RNA SMALL SUBUNIT METHYLTRANSFERASE C"/>
    <property type="match status" value="1"/>
</dbReference>
<dbReference type="Pfam" id="PF05175">
    <property type="entry name" value="MTS"/>
    <property type="match status" value="1"/>
</dbReference>
<dbReference type="PIRSF" id="PIRSF037565">
    <property type="entry name" value="RRNA_m2G_Mtase_RsmD_prd"/>
    <property type="match status" value="1"/>
</dbReference>
<dbReference type="SUPFAM" id="SSF53335">
    <property type="entry name" value="S-adenosyl-L-methionine-dependent methyltransferases"/>
    <property type="match status" value="1"/>
</dbReference>